<sequence length="426" mass="47580">MLDIKQIRENPQLVQERLNSRSGKYDIEPILQLDRQQRELEGTRSQLQARSNEIGKIVGQKIKSGINSQDPEIQALRDEGNSVKATLSELEPQEKDLKAQIAQLVLALPNLPSDSTPLGKNEEDNVEVRRWGDEYIPQNPNILPHWEIGEKLGILNVERAVKVAQSRFVALVGAGAALERALIQFMLTLHTQAGYLEVSPPLLVNTESLTATGQLPKFAEESFKCADDDLWLIPTAEVPVTNLYRGEILAAEDLPIYHCAFTPCFRREAGSYGRDMRGLIRLHQFNKVEMVKFVEPSTSFDELEKLVGNAEAILQALRLPYRVVNLSTGDLGFASTKTYDLEVWLPSSGKYREISSCSNTIDFQARRADIRFKEAGKKGTQFVHTLNGSGLAVGRTMAAILENYQQPDGTVKIPEALQPYLGREVL</sequence>
<organism>
    <name type="scientific">Nostoc punctiforme (strain ATCC 29133 / PCC 73102)</name>
    <dbReference type="NCBI Taxonomy" id="63737"/>
    <lineage>
        <taxon>Bacteria</taxon>
        <taxon>Bacillati</taxon>
        <taxon>Cyanobacteriota</taxon>
        <taxon>Cyanophyceae</taxon>
        <taxon>Nostocales</taxon>
        <taxon>Nostocaceae</taxon>
        <taxon>Nostoc</taxon>
    </lineage>
</organism>
<gene>
    <name evidence="1" type="primary">serS</name>
    <name type="ordered locus">Npun_F4034</name>
</gene>
<evidence type="ECO:0000255" key="1">
    <source>
        <dbReference type="HAMAP-Rule" id="MF_00176"/>
    </source>
</evidence>
<dbReference type="EC" id="6.1.1.11" evidence="1"/>
<dbReference type="EMBL" id="CP001037">
    <property type="protein sequence ID" value="ACC82413.1"/>
    <property type="molecule type" value="Genomic_DNA"/>
</dbReference>
<dbReference type="RefSeq" id="WP_012410380.1">
    <property type="nucleotide sequence ID" value="NC_010628.1"/>
</dbReference>
<dbReference type="SMR" id="B2J6K8"/>
<dbReference type="STRING" id="63737.Npun_F4034"/>
<dbReference type="EnsemblBacteria" id="ACC82413">
    <property type="protein sequence ID" value="ACC82413"/>
    <property type="gene ID" value="Npun_F4034"/>
</dbReference>
<dbReference type="KEGG" id="npu:Npun_F4034"/>
<dbReference type="eggNOG" id="COG0172">
    <property type="taxonomic scope" value="Bacteria"/>
</dbReference>
<dbReference type="HOGENOM" id="CLU_023797_1_1_3"/>
<dbReference type="OrthoDB" id="9804647at2"/>
<dbReference type="PhylomeDB" id="B2J6K8"/>
<dbReference type="UniPathway" id="UPA00906">
    <property type="reaction ID" value="UER00895"/>
</dbReference>
<dbReference type="Proteomes" id="UP000001191">
    <property type="component" value="Chromosome"/>
</dbReference>
<dbReference type="GO" id="GO:0005737">
    <property type="term" value="C:cytoplasm"/>
    <property type="evidence" value="ECO:0007669"/>
    <property type="project" value="UniProtKB-SubCell"/>
</dbReference>
<dbReference type="GO" id="GO:0005524">
    <property type="term" value="F:ATP binding"/>
    <property type="evidence" value="ECO:0007669"/>
    <property type="project" value="UniProtKB-UniRule"/>
</dbReference>
<dbReference type="GO" id="GO:0004828">
    <property type="term" value="F:serine-tRNA ligase activity"/>
    <property type="evidence" value="ECO:0007669"/>
    <property type="project" value="UniProtKB-UniRule"/>
</dbReference>
<dbReference type="GO" id="GO:0016260">
    <property type="term" value="P:selenocysteine biosynthetic process"/>
    <property type="evidence" value="ECO:0007669"/>
    <property type="project" value="UniProtKB-UniRule"/>
</dbReference>
<dbReference type="GO" id="GO:0006434">
    <property type="term" value="P:seryl-tRNA aminoacylation"/>
    <property type="evidence" value="ECO:0007669"/>
    <property type="project" value="UniProtKB-UniRule"/>
</dbReference>
<dbReference type="CDD" id="cd00770">
    <property type="entry name" value="SerRS_core"/>
    <property type="match status" value="1"/>
</dbReference>
<dbReference type="Gene3D" id="3.30.930.10">
    <property type="entry name" value="Bira Bifunctional Protein, Domain 2"/>
    <property type="match status" value="1"/>
</dbReference>
<dbReference type="Gene3D" id="1.10.287.40">
    <property type="entry name" value="Serine-tRNA synthetase, tRNA binding domain"/>
    <property type="match status" value="1"/>
</dbReference>
<dbReference type="HAMAP" id="MF_00176">
    <property type="entry name" value="Ser_tRNA_synth_type1"/>
    <property type="match status" value="1"/>
</dbReference>
<dbReference type="InterPro" id="IPR002314">
    <property type="entry name" value="aa-tRNA-synt_IIb"/>
</dbReference>
<dbReference type="InterPro" id="IPR006195">
    <property type="entry name" value="aa-tRNA-synth_II"/>
</dbReference>
<dbReference type="InterPro" id="IPR045864">
    <property type="entry name" value="aa-tRNA-synth_II/BPL/LPL"/>
</dbReference>
<dbReference type="InterPro" id="IPR002317">
    <property type="entry name" value="Ser-tRNA-ligase_type_1"/>
</dbReference>
<dbReference type="InterPro" id="IPR015866">
    <property type="entry name" value="Ser-tRNA-synth_1_N"/>
</dbReference>
<dbReference type="InterPro" id="IPR042103">
    <property type="entry name" value="SerRS_1_N_sf"/>
</dbReference>
<dbReference type="InterPro" id="IPR033729">
    <property type="entry name" value="SerRS_core"/>
</dbReference>
<dbReference type="InterPro" id="IPR010978">
    <property type="entry name" value="tRNA-bd_arm"/>
</dbReference>
<dbReference type="NCBIfam" id="TIGR00414">
    <property type="entry name" value="serS"/>
    <property type="match status" value="1"/>
</dbReference>
<dbReference type="PANTHER" id="PTHR43697:SF1">
    <property type="entry name" value="SERINE--TRNA LIGASE"/>
    <property type="match status" value="1"/>
</dbReference>
<dbReference type="PANTHER" id="PTHR43697">
    <property type="entry name" value="SERYL-TRNA SYNTHETASE"/>
    <property type="match status" value="1"/>
</dbReference>
<dbReference type="Pfam" id="PF02403">
    <property type="entry name" value="Seryl_tRNA_N"/>
    <property type="match status" value="1"/>
</dbReference>
<dbReference type="Pfam" id="PF00587">
    <property type="entry name" value="tRNA-synt_2b"/>
    <property type="match status" value="1"/>
</dbReference>
<dbReference type="PIRSF" id="PIRSF001529">
    <property type="entry name" value="Ser-tRNA-synth_IIa"/>
    <property type="match status" value="1"/>
</dbReference>
<dbReference type="PRINTS" id="PR00981">
    <property type="entry name" value="TRNASYNTHSER"/>
</dbReference>
<dbReference type="SUPFAM" id="SSF55681">
    <property type="entry name" value="Class II aaRS and biotin synthetases"/>
    <property type="match status" value="1"/>
</dbReference>
<dbReference type="SUPFAM" id="SSF46589">
    <property type="entry name" value="tRNA-binding arm"/>
    <property type="match status" value="1"/>
</dbReference>
<dbReference type="PROSITE" id="PS50862">
    <property type="entry name" value="AA_TRNA_LIGASE_II"/>
    <property type="match status" value="1"/>
</dbReference>
<protein>
    <recommendedName>
        <fullName evidence="1">Serine--tRNA ligase</fullName>
        <ecNumber evidence="1">6.1.1.11</ecNumber>
    </recommendedName>
    <alternativeName>
        <fullName evidence="1">Seryl-tRNA synthetase</fullName>
        <shortName evidence="1">SerRS</shortName>
    </alternativeName>
    <alternativeName>
        <fullName evidence="1">Seryl-tRNA(Ser/Sec) synthetase</fullName>
    </alternativeName>
</protein>
<proteinExistence type="inferred from homology"/>
<feature type="chain" id="PRO_1000098102" description="Serine--tRNA ligase">
    <location>
        <begin position="1"/>
        <end position="426"/>
    </location>
</feature>
<feature type="binding site" evidence="1">
    <location>
        <begin position="235"/>
        <end position="237"/>
    </location>
    <ligand>
        <name>L-serine</name>
        <dbReference type="ChEBI" id="CHEBI:33384"/>
    </ligand>
</feature>
<feature type="binding site" evidence="1">
    <location>
        <begin position="266"/>
        <end position="268"/>
    </location>
    <ligand>
        <name>ATP</name>
        <dbReference type="ChEBI" id="CHEBI:30616"/>
    </ligand>
</feature>
<feature type="binding site" evidence="1">
    <location>
        <position position="289"/>
    </location>
    <ligand>
        <name>L-serine</name>
        <dbReference type="ChEBI" id="CHEBI:33384"/>
    </ligand>
</feature>
<feature type="binding site" evidence="1">
    <location>
        <begin position="353"/>
        <end position="356"/>
    </location>
    <ligand>
        <name>ATP</name>
        <dbReference type="ChEBI" id="CHEBI:30616"/>
    </ligand>
</feature>
<feature type="binding site" evidence="1">
    <location>
        <position position="389"/>
    </location>
    <ligand>
        <name>L-serine</name>
        <dbReference type="ChEBI" id="CHEBI:33384"/>
    </ligand>
</feature>
<reference key="1">
    <citation type="journal article" date="2013" name="Plant Physiol.">
        <title>A Nostoc punctiforme Sugar Transporter Necessary to Establish a Cyanobacterium-Plant Symbiosis.</title>
        <authorList>
            <person name="Ekman M."/>
            <person name="Picossi S."/>
            <person name="Campbell E.L."/>
            <person name="Meeks J.C."/>
            <person name="Flores E."/>
        </authorList>
    </citation>
    <scope>NUCLEOTIDE SEQUENCE [LARGE SCALE GENOMIC DNA]</scope>
    <source>
        <strain>ATCC 29133 / PCC 73102</strain>
    </source>
</reference>
<accession>B2J6K8</accession>
<keyword id="KW-0030">Aminoacyl-tRNA synthetase</keyword>
<keyword id="KW-0067">ATP-binding</keyword>
<keyword id="KW-0963">Cytoplasm</keyword>
<keyword id="KW-0436">Ligase</keyword>
<keyword id="KW-0547">Nucleotide-binding</keyword>
<keyword id="KW-0648">Protein biosynthesis</keyword>
<keyword id="KW-1185">Reference proteome</keyword>
<comment type="function">
    <text evidence="1">Catalyzes the attachment of serine to tRNA(Ser). Is also able to aminoacylate tRNA(Sec) with serine, to form the misacylated tRNA L-seryl-tRNA(Sec), which will be further converted into selenocysteinyl-tRNA(Sec).</text>
</comment>
<comment type="catalytic activity">
    <reaction evidence="1">
        <text>tRNA(Ser) + L-serine + ATP = L-seryl-tRNA(Ser) + AMP + diphosphate + H(+)</text>
        <dbReference type="Rhea" id="RHEA:12292"/>
        <dbReference type="Rhea" id="RHEA-COMP:9669"/>
        <dbReference type="Rhea" id="RHEA-COMP:9703"/>
        <dbReference type="ChEBI" id="CHEBI:15378"/>
        <dbReference type="ChEBI" id="CHEBI:30616"/>
        <dbReference type="ChEBI" id="CHEBI:33019"/>
        <dbReference type="ChEBI" id="CHEBI:33384"/>
        <dbReference type="ChEBI" id="CHEBI:78442"/>
        <dbReference type="ChEBI" id="CHEBI:78533"/>
        <dbReference type="ChEBI" id="CHEBI:456215"/>
        <dbReference type="EC" id="6.1.1.11"/>
    </reaction>
</comment>
<comment type="catalytic activity">
    <reaction evidence="1">
        <text>tRNA(Sec) + L-serine + ATP = L-seryl-tRNA(Sec) + AMP + diphosphate + H(+)</text>
        <dbReference type="Rhea" id="RHEA:42580"/>
        <dbReference type="Rhea" id="RHEA-COMP:9742"/>
        <dbReference type="Rhea" id="RHEA-COMP:10128"/>
        <dbReference type="ChEBI" id="CHEBI:15378"/>
        <dbReference type="ChEBI" id="CHEBI:30616"/>
        <dbReference type="ChEBI" id="CHEBI:33019"/>
        <dbReference type="ChEBI" id="CHEBI:33384"/>
        <dbReference type="ChEBI" id="CHEBI:78442"/>
        <dbReference type="ChEBI" id="CHEBI:78533"/>
        <dbReference type="ChEBI" id="CHEBI:456215"/>
        <dbReference type="EC" id="6.1.1.11"/>
    </reaction>
</comment>
<comment type="pathway">
    <text evidence="1">Aminoacyl-tRNA biosynthesis; selenocysteinyl-tRNA(Sec) biosynthesis; L-seryl-tRNA(Sec) from L-serine and tRNA(Sec): step 1/1.</text>
</comment>
<comment type="subunit">
    <text evidence="1">Homodimer. The tRNA molecule binds across the dimer.</text>
</comment>
<comment type="subcellular location">
    <subcellularLocation>
        <location evidence="1">Cytoplasm</location>
    </subcellularLocation>
</comment>
<comment type="domain">
    <text evidence="1">Consists of two distinct domains, a catalytic core and a N-terminal extension that is involved in tRNA binding.</text>
</comment>
<comment type="similarity">
    <text evidence="1">Belongs to the class-II aminoacyl-tRNA synthetase family. Type-1 seryl-tRNA synthetase subfamily.</text>
</comment>
<name>SYS_NOSP7</name>